<gene>
    <name evidence="1" type="primary">cheD1</name>
    <name type="ordered locus">Rfer_0570</name>
</gene>
<protein>
    <recommendedName>
        <fullName evidence="1">Probable chemoreceptor glutamine deamidase CheD 1</fullName>
        <ecNumber evidence="1">3.5.1.44</ecNumber>
    </recommendedName>
</protein>
<dbReference type="EC" id="3.5.1.44" evidence="1"/>
<dbReference type="EMBL" id="CP000267">
    <property type="protein sequence ID" value="ABD68321.1"/>
    <property type="molecule type" value="Genomic_DNA"/>
</dbReference>
<dbReference type="RefSeq" id="WP_011462894.1">
    <property type="nucleotide sequence ID" value="NC_007908.1"/>
</dbReference>
<dbReference type="SMR" id="Q221I2"/>
<dbReference type="STRING" id="338969.Rfer_0570"/>
<dbReference type="KEGG" id="rfr:Rfer_0570"/>
<dbReference type="eggNOG" id="COG1871">
    <property type="taxonomic scope" value="Bacteria"/>
</dbReference>
<dbReference type="HOGENOM" id="CLU_087854_0_0_4"/>
<dbReference type="Proteomes" id="UP000008332">
    <property type="component" value="Chromosome"/>
</dbReference>
<dbReference type="GO" id="GO:0050568">
    <property type="term" value="F:protein-glutamine glutaminase activity"/>
    <property type="evidence" value="ECO:0007669"/>
    <property type="project" value="UniProtKB-UniRule"/>
</dbReference>
<dbReference type="GO" id="GO:0006935">
    <property type="term" value="P:chemotaxis"/>
    <property type="evidence" value="ECO:0007669"/>
    <property type="project" value="UniProtKB-UniRule"/>
</dbReference>
<dbReference type="CDD" id="cd16352">
    <property type="entry name" value="CheD"/>
    <property type="match status" value="1"/>
</dbReference>
<dbReference type="Gene3D" id="3.30.1330.200">
    <property type="match status" value="1"/>
</dbReference>
<dbReference type="HAMAP" id="MF_01440">
    <property type="entry name" value="CheD"/>
    <property type="match status" value="1"/>
</dbReference>
<dbReference type="InterPro" id="IPR038592">
    <property type="entry name" value="CheD-like_sf"/>
</dbReference>
<dbReference type="InterPro" id="IPR005659">
    <property type="entry name" value="Chemorcpt_Glu_NH3ase_CheD"/>
</dbReference>
<dbReference type="InterPro" id="IPR011324">
    <property type="entry name" value="Cytotoxic_necrot_fac-like_cat"/>
</dbReference>
<dbReference type="NCBIfam" id="NF010013">
    <property type="entry name" value="PRK13487.1"/>
    <property type="match status" value="1"/>
</dbReference>
<dbReference type="PANTHER" id="PTHR35147">
    <property type="entry name" value="CHEMORECEPTOR GLUTAMINE DEAMIDASE CHED-RELATED"/>
    <property type="match status" value="1"/>
</dbReference>
<dbReference type="PANTHER" id="PTHR35147:SF2">
    <property type="entry name" value="CHEMORECEPTOR GLUTAMINE DEAMIDASE CHED-RELATED"/>
    <property type="match status" value="1"/>
</dbReference>
<dbReference type="Pfam" id="PF03975">
    <property type="entry name" value="CheD"/>
    <property type="match status" value="1"/>
</dbReference>
<dbReference type="SUPFAM" id="SSF64438">
    <property type="entry name" value="CNF1/YfiH-like putative cysteine hydrolases"/>
    <property type="match status" value="1"/>
</dbReference>
<comment type="function">
    <text evidence="1">Probably deamidates glutamine residues to glutamate on methyl-accepting chemotaxis receptors (MCPs), playing an important role in chemotaxis.</text>
</comment>
<comment type="catalytic activity">
    <reaction evidence="1">
        <text>L-glutaminyl-[protein] + H2O = L-glutamyl-[protein] + NH4(+)</text>
        <dbReference type="Rhea" id="RHEA:16441"/>
        <dbReference type="Rhea" id="RHEA-COMP:10207"/>
        <dbReference type="Rhea" id="RHEA-COMP:10208"/>
        <dbReference type="ChEBI" id="CHEBI:15377"/>
        <dbReference type="ChEBI" id="CHEBI:28938"/>
        <dbReference type="ChEBI" id="CHEBI:29973"/>
        <dbReference type="ChEBI" id="CHEBI:30011"/>
        <dbReference type="EC" id="3.5.1.44"/>
    </reaction>
</comment>
<comment type="similarity">
    <text evidence="1">Belongs to the CheD family.</text>
</comment>
<reference key="1">
    <citation type="submission" date="2006-02" db="EMBL/GenBank/DDBJ databases">
        <title>Complete sequence of chromosome of Rhodoferax ferrireducens DSM 15236.</title>
        <authorList>
            <person name="Copeland A."/>
            <person name="Lucas S."/>
            <person name="Lapidus A."/>
            <person name="Barry K."/>
            <person name="Detter J.C."/>
            <person name="Glavina del Rio T."/>
            <person name="Hammon N."/>
            <person name="Israni S."/>
            <person name="Pitluck S."/>
            <person name="Brettin T."/>
            <person name="Bruce D."/>
            <person name="Han C."/>
            <person name="Tapia R."/>
            <person name="Gilna P."/>
            <person name="Kiss H."/>
            <person name="Schmutz J."/>
            <person name="Larimer F."/>
            <person name="Land M."/>
            <person name="Kyrpides N."/>
            <person name="Ivanova N."/>
            <person name="Richardson P."/>
        </authorList>
    </citation>
    <scope>NUCLEOTIDE SEQUENCE [LARGE SCALE GENOMIC DNA]</scope>
    <source>
        <strain>ATCC BAA-621 / DSM 15236 / T118</strain>
    </source>
</reference>
<keyword id="KW-0145">Chemotaxis</keyword>
<keyword id="KW-0378">Hydrolase</keyword>
<keyword id="KW-1185">Reference proteome</keyword>
<proteinExistence type="inferred from homology"/>
<accession>Q221I2</accession>
<evidence type="ECO:0000255" key="1">
    <source>
        <dbReference type="HAMAP-Rule" id="MF_01440"/>
    </source>
</evidence>
<feature type="chain" id="PRO_0000251060" description="Probable chemoreceptor glutamine deamidase CheD 1">
    <location>
        <begin position="1"/>
        <end position="234"/>
    </location>
</feature>
<name>CHED1_ALBFT</name>
<organism>
    <name type="scientific">Albidiferax ferrireducens (strain ATCC BAA-621 / DSM 15236 / T118)</name>
    <name type="common">Rhodoferax ferrireducens</name>
    <dbReference type="NCBI Taxonomy" id="338969"/>
    <lineage>
        <taxon>Bacteria</taxon>
        <taxon>Pseudomonadati</taxon>
        <taxon>Pseudomonadota</taxon>
        <taxon>Betaproteobacteria</taxon>
        <taxon>Burkholderiales</taxon>
        <taxon>Comamonadaceae</taxon>
        <taxon>Rhodoferax</taxon>
    </lineage>
</organism>
<sequence length="234" mass="25245">MNMFASGTAALPLRASGVVVAPTVLAGGALSRVDQLKAQIRNPGEASFFYRDHHFQYDAVKVLPGEYFVSAEDLVIMTVLGSCISACIWDGRVRAGGMNHFMLPDGDSVDGFGRYGSYAMELLINELLKKGARRESMQAKVFGGAAVMAGFTTMNVGERNTKFVLDYLATERIPVVSQDVLDIHPRKVCFFPVTGKVLVKRLAHSHPETLAVEERKGNAATVAKATSGGSVDLF</sequence>